<protein>
    <recommendedName>
        <fullName evidence="2">Small ribosomal subunit protein cS23</fullName>
    </recommendedName>
    <alternativeName>
        <fullName>30S ribosomal protein 3, chloroplastic</fullName>
        <shortName>PSRP-3</shortName>
    </alternativeName>
</protein>
<reference key="1">
    <citation type="submission" date="2001-02" db="EMBL/GenBank/DDBJ databases">
        <title>An evolutionary study of ycf65 in Euglena chloroplasts.</title>
        <authorList>
            <person name="Hallick R.B."/>
            <person name="De Armond R.L."/>
        </authorList>
    </citation>
    <scope>NUCLEOTIDE SEQUENCE [GENOMIC DNA]</scope>
</reference>
<evidence type="ECO:0000250" key="1"/>
<evidence type="ECO:0000255" key="2">
    <source>
        <dbReference type="HAMAP-Rule" id="MF_00619"/>
    </source>
</evidence>
<evidence type="ECO:0000305" key="3"/>
<comment type="function">
    <text evidence="1">Probably a ribosomal protein or a ribosome-associated protein.</text>
</comment>
<comment type="subunit">
    <text evidence="1">Part of the 30S ribosomal subunit.</text>
</comment>
<comment type="subcellular location">
    <subcellularLocation>
        <location>Plastid</location>
        <location>Chloroplast</location>
    </subcellularLocation>
</comment>
<comment type="similarity">
    <text evidence="3">Belongs to the chloroplast-specific ribosomal protein cS23 family.</text>
</comment>
<geneLocation type="chloroplast"/>
<proteinExistence type="inferred from homology"/>
<organism>
    <name type="scientific">Euglena mutabilis</name>
    <dbReference type="NCBI Taxonomy" id="38275"/>
    <lineage>
        <taxon>Eukaryota</taxon>
        <taxon>Discoba</taxon>
        <taxon>Euglenozoa</taxon>
        <taxon>Euglenida</taxon>
        <taxon>Spirocuta</taxon>
        <taxon>Euglenophyceae</taxon>
        <taxon>Euglenales</taxon>
        <taxon>Euglenaceae</taxon>
        <taxon>Euglena</taxon>
    </lineage>
</organism>
<accession>Q9BAC3</accession>
<name>RRP3_EUGMU</name>
<dbReference type="EMBL" id="AF347931">
    <property type="protein sequence ID" value="AAK27691.1"/>
    <property type="molecule type" value="Genomic_DNA"/>
</dbReference>
<dbReference type="SMR" id="Q9BAC3"/>
<dbReference type="GO" id="GO:0009507">
    <property type="term" value="C:chloroplast"/>
    <property type="evidence" value="ECO:0007669"/>
    <property type="project" value="UniProtKB-SubCell"/>
</dbReference>
<dbReference type="GO" id="GO:1990904">
    <property type="term" value="C:ribonucleoprotein complex"/>
    <property type="evidence" value="ECO:0007669"/>
    <property type="project" value="UniProtKB-KW"/>
</dbReference>
<dbReference type="GO" id="GO:0005840">
    <property type="term" value="C:ribosome"/>
    <property type="evidence" value="ECO:0007669"/>
    <property type="project" value="UniProtKB-KW"/>
</dbReference>
<dbReference type="GO" id="GO:0003735">
    <property type="term" value="F:structural constituent of ribosome"/>
    <property type="evidence" value="ECO:0007669"/>
    <property type="project" value="InterPro"/>
</dbReference>
<dbReference type="GO" id="GO:0006412">
    <property type="term" value="P:translation"/>
    <property type="evidence" value="ECO:0007669"/>
    <property type="project" value="UniProtKB-UniRule"/>
</dbReference>
<dbReference type="Gene3D" id="3.30.390.140">
    <property type="match status" value="1"/>
</dbReference>
<dbReference type="HAMAP" id="MF_00619">
    <property type="entry name" value="Ribosomal_plastid_cS23"/>
    <property type="match status" value="1"/>
</dbReference>
<dbReference type="InterPro" id="IPR038447">
    <property type="entry name" value="PSRP-3/Ycf65_sf"/>
</dbReference>
<dbReference type="InterPro" id="IPR006924">
    <property type="entry name" value="Ribosomal_PSRP3/Ycf65"/>
</dbReference>
<dbReference type="PANTHER" id="PTHR35108">
    <property type="entry name" value="30S RIBOSOMAL PROTEIN 3, CHLOROPLASTIC"/>
    <property type="match status" value="1"/>
</dbReference>
<dbReference type="PANTHER" id="PTHR35108:SF1">
    <property type="entry name" value="OS04G0461100 PROTEIN"/>
    <property type="match status" value="1"/>
</dbReference>
<dbReference type="Pfam" id="PF04839">
    <property type="entry name" value="PSRP-3_Ycf65"/>
    <property type="match status" value="1"/>
</dbReference>
<sequence>MERFVLKFLLIDKVIAVCLDQKISNERLNPLTEYFFWPQRDAWEDMKNFIDNNDWIDPKDAVNILNRITEVINFWEESAQLKKEDIKNLNIKFPDCVFIVM</sequence>
<keyword id="KW-0150">Chloroplast</keyword>
<keyword id="KW-0934">Plastid</keyword>
<keyword id="KW-0687">Ribonucleoprotein</keyword>
<keyword id="KW-0689">Ribosomal protein</keyword>
<gene>
    <name type="primary">ycf65</name>
</gene>
<feature type="chain" id="PRO_0000216757" description="Small ribosomal subunit protein cS23">
    <location>
        <begin position="1"/>
        <end position="101"/>
    </location>
</feature>